<name>RBFA_CHLMU</name>
<reference key="1">
    <citation type="journal article" date="2000" name="Nucleic Acids Res.">
        <title>Genome sequences of Chlamydia trachomatis MoPn and Chlamydia pneumoniae AR39.</title>
        <authorList>
            <person name="Read T.D."/>
            <person name="Brunham R.C."/>
            <person name="Shen C."/>
            <person name="Gill S.R."/>
            <person name="Heidelberg J.F."/>
            <person name="White O."/>
            <person name="Hickey E.K."/>
            <person name="Peterson J.D."/>
            <person name="Utterback T.R."/>
            <person name="Berry K.J."/>
            <person name="Bass S."/>
            <person name="Linher K.D."/>
            <person name="Weidman J.F."/>
            <person name="Khouri H.M."/>
            <person name="Craven B."/>
            <person name="Bowman C."/>
            <person name="Dodson R.J."/>
            <person name="Gwinn M.L."/>
            <person name="Nelson W.C."/>
            <person name="DeBoy R.T."/>
            <person name="Kolonay J.F."/>
            <person name="McClarty G."/>
            <person name="Salzberg S.L."/>
            <person name="Eisen J.A."/>
            <person name="Fraser C.M."/>
        </authorList>
    </citation>
    <scope>NUCLEOTIDE SEQUENCE [LARGE SCALE GENOMIC DNA]</scope>
    <source>
        <strain>MoPn / Nigg</strain>
    </source>
</reference>
<sequence>MTENRRMKKVNAMLRESIAKVILKDVKHPKISNRWITITRVSLSRDLQSARVYVSIMPHENSQEETLAALKASAGFIACQASKDVVLKYFPDLNFYMEDIFSPQDHIESLLLKIAEQDKKLTHNNNNSSELHD</sequence>
<protein>
    <recommendedName>
        <fullName evidence="1">Ribosome-binding factor A</fullName>
    </recommendedName>
</protein>
<keyword id="KW-0963">Cytoplasm</keyword>
<keyword id="KW-0690">Ribosome biogenesis</keyword>
<comment type="function">
    <text evidence="1">One of several proteins that assist in the late maturation steps of the functional core of the 30S ribosomal subunit. Associates with free 30S ribosomal subunits (but not with 30S subunits that are part of 70S ribosomes or polysomes). Required for efficient processing of 16S rRNA. May interact with the 5'-terminal helix region of 16S rRNA.</text>
</comment>
<comment type="subunit">
    <text evidence="1">Monomer. Binds 30S ribosomal subunits, but not 50S ribosomal subunits or 70S ribosomes.</text>
</comment>
<comment type="subcellular location">
    <subcellularLocation>
        <location evidence="1">Cytoplasm</location>
    </subcellularLocation>
</comment>
<comment type="similarity">
    <text evidence="1">Belongs to the RbfA family.</text>
</comment>
<accession>Q9PKU1</accession>
<proteinExistence type="inferred from homology"/>
<evidence type="ECO:0000255" key="1">
    <source>
        <dbReference type="HAMAP-Rule" id="MF_00003"/>
    </source>
</evidence>
<dbReference type="EMBL" id="AE002160">
    <property type="protein sequence ID" value="AAF73551.1"/>
    <property type="molecule type" value="Genomic_DNA"/>
</dbReference>
<dbReference type="RefSeq" id="WP_010904325.1">
    <property type="nucleotide sequence ID" value="NZ_CP063055.1"/>
</dbReference>
<dbReference type="SMR" id="Q9PKU1"/>
<dbReference type="GeneID" id="1245722"/>
<dbReference type="KEGG" id="cmu:TC_0370"/>
<dbReference type="eggNOG" id="COG0858">
    <property type="taxonomic scope" value="Bacteria"/>
</dbReference>
<dbReference type="HOGENOM" id="CLU_089475_6_3_0"/>
<dbReference type="OrthoDB" id="21494at2"/>
<dbReference type="Proteomes" id="UP000000800">
    <property type="component" value="Chromosome"/>
</dbReference>
<dbReference type="GO" id="GO:0005829">
    <property type="term" value="C:cytosol"/>
    <property type="evidence" value="ECO:0007669"/>
    <property type="project" value="TreeGrafter"/>
</dbReference>
<dbReference type="GO" id="GO:0043024">
    <property type="term" value="F:ribosomal small subunit binding"/>
    <property type="evidence" value="ECO:0007669"/>
    <property type="project" value="TreeGrafter"/>
</dbReference>
<dbReference type="GO" id="GO:0030490">
    <property type="term" value="P:maturation of SSU-rRNA"/>
    <property type="evidence" value="ECO:0007669"/>
    <property type="project" value="UniProtKB-UniRule"/>
</dbReference>
<dbReference type="Gene3D" id="3.30.300.20">
    <property type="match status" value="1"/>
</dbReference>
<dbReference type="HAMAP" id="MF_00003">
    <property type="entry name" value="RbfA"/>
    <property type="match status" value="1"/>
</dbReference>
<dbReference type="InterPro" id="IPR015946">
    <property type="entry name" value="KH_dom-like_a/b"/>
</dbReference>
<dbReference type="InterPro" id="IPR000238">
    <property type="entry name" value="RbfA"/>
</dbReference>
<dbReference type="InterPro" id="IPR023799">
    <property type="entry name" value="RbfA_dom_sf"/>
</dbReference>
<dbReference type="NCBIfam" id="TIGR00082">
    <property type="entry name" value="rbfA"/>
    <property type="match status" value="1"/>
</dbReference>
<dbReference type="PANTHER" id="PTHR33515">
    <property type="entry name" value="RIBOSOME-BINDING FACTOR A, CHLOROPLASTIC-RELATED"/>
    <property type="match status" value="1"/>
</dbReference>
<dbReference type="PANTHER" id="PTHR33515:SF1">
    <property type="entry name" value="RIBOSOME-BINDING FACTOR A, CHLOROPLASTIC-RELATED"/>
    <property type="match status" value="1"/>
</dbReference>
<dbReference type="Pfam" id="PF02033">
    <property type="entry name" value="RBFA"/>
    <property type="match status" value="1"/>
</dbReference>
<dbReference type="SUPFAM" id="SSF89919">
    <property type="entry name" value="Ribosome-binding factor A, RbfA"/>
    <property type="match status" value="1"/>
</dbReference>
<organism>
    <name type="scientific">Chlamydia muridarum (strain MoPn / Nigg)</name>
    <dbReference type="NCBI Taxonomy" id="243161"/>
    <lineage>
        <taxon>Bacteria</taxon>
        <taxon>Pseudomonadati</taxon>
        <taxon>Chlamydiota</taxon>
        <taxon>Chlamydiia</taxon>
        <taxon>Chlamydiales</taxon>
        <taxon>Chlamydiaceae</taxon>
        <taxon>Chlamydia/Chlamydophila group</taxon>
        <taxon>Chlamydia</taxon>
    </lineage>
</organism>
<feature type="chain" id="PRO_0000102644" description="Ribosome-binding factor A">
    <location>
        <begin position="1"/>
        <end position="133"/>
    </location>
</feature>
<gene>
    <name evidence="1" type="primary">rbfA</name>
    <name type="ordered locus">TC_0370</name>
</gene>